<keyword id="KW-0924">Ammonia transport</keyword>
<keyword id="KW-1003">Cell membrane</keyword>
<keyword id="KW-0472">Membrane</keyword>
<keyword id="KW-1185">Reference proteome</keyword>
<keyword id="KW-0812">Transmembrane</keyword>
<keyword id="KW-1133">Transmembrane helix</keyword>
<keyword id="KW-0813">Transport</keyword>
<reference key="1">
    <citation type="journal article" date="1996" name="Science">
        <title>Complete genome sequence of the methanogenic archaeon, Methanococcus jannaschii.</title>
        <authorList>
            <person name="Bult C.J."/>
            <person name="White O."/>
            <person name="Olsen G.J."/>
            <person name="Zhou L."/>
            <person name="Fleischmann R.D."/>
            <person name="Sutton G.G."/>
            <person name="Blake J.A."/>
            <person name="FitzGerald L.M."/>
            <person name="Clayton R.A."/>
            <person name="Gocayne J.D."/>
            <person name="Kerlavage A.R."/>
            <person name="Dougherty B.A."/>
            <person name="Tomb J.-F."/>
            <person name="Adams M.D."/>
            <person name="Reich C.I."/>
            <person name="Overbeek R."/>
            <person name="Kirkness E.F."/>
            <person name="Weinstock K.G."/>
            <person name="Merrick J.M."/>
            <person name="Glodek A."/>
            <person name="Scott J.L."/>
            <person name="Geoghagen N.S.M."/>
            <person name="Weidman J.F."/>
            <person name="Fuhrmann J.L."/>
            <person name="Nguyen D."/>
            <person name="Utterback T.R."/>
            <person name="Kelley J.M."/>
            <person name="Peterson J.D."/>
            <person name="Sadow P.W."/>
            <person name="Hanna M.C."/>
            <person name="Cotton M.D."/>
            <person name="Roberts K.M."/>
            <person name="Hurst M.A."/>
            <person name="Kaine B.P."/>
            <person name="Borodovsky M."/>
            <person name="Klenk H.-P."/>
            <person name="Fraser C.M."/>
            <person name="Smith H.O."/>
            <person name="Woese C.R."/>
            <person name="Venter J.C."/>
        </authorList>
    </citation>
    <scope>NUCLEOTIDE SEQUENCE [LARGE SCALE GENOMIC DNA]</scope>
    <source>
        <strain>ATCC 43067 / DSM 2661 / JAL-1 / JCM 10045 / NBRC 100440</strain>
    </source>
</reference>
<reference key="2">
    <citation type="journal article" date="2007" name="EMBO J.">
        <title>Structure of GlnK1 with bound effectors indicates regulatory mechanism for ammonia uptake.</title>
        <authorList>
            <person name="Yildiz O."/>
            <person name="Kalthoff C."/>
            <person name="Raunser S."/>
            <person name="Kuhlbrandt W."/>
        </authorList>
    </citation>
    <scope>ACTIVITY REGULATION</scope>
    <scope>SUBUNIT</scope>
    <scope>INTERACTION WITH GLNK1</scope>
</reference>
<feature type="chain" id="PRO_0000139764" description="Ammonium transporter Amt1">
    <location>
        <begin position="1"/>
        <end position="391"/>
    </location>
</feature>
<feature type="transmembrane region" description="Helical" evidence="3">
    <location>
        <begin position="12"/>
        <end position="32"/>
    </location>
</feature>
<feature type="transmembrane region" description="Helical" evidence="3">
    <location>
        <begin position="51"/>
        <end position="71"/>
    </location>
</feature>
<feature type="transmembrane region" description="Helical" evidence="3">
    <location>
        <begin position="88"/>
        <end position="108"/>
    </location>
</feature>
<feature type="transmembrane region" description="Helical" evidence="3">
    <location>
        <begin position="112"/>
        <end position="132"/>
    </location>
</feature>
<feature type="transmembrane region" description="Helical" evidence="3">
    <location>
        <begin position="152"/>
        <end position="172"/>
    </location>
</feature>
<feature type="transmembrane region" description="Helical" evidence="3">
    <location>
        <begin position="192"/>
        <end position="212"/>
    </location>
</feature>
<feature type="transmembrane region" description="Helical" evidence="3">
    <location>
        <begin position="223"/>
        <end position="243"/>
    </location>
</feature>
<feature type="transmembrane region" description="Helical" evidence="3">
    <location>
        <begin position="261"/>
        <end position="281"/>
    </location>
</feature>
<feature type="transmembrane region" description="Helical" evidence="3">
    <location>
        <begin position="305"/>
        <end position="325"/>
    </location>
</feature>
<feature type="transmembrane region" description="Helical" evidence="3">
    <location>
        <begin position="338"/>
        <end position="358"/>
    </location>
</feature>
<feature type="site" description="Twin-His motif. Important for optimum substrate conductance" evidence="2">
    <location>
        <position position="158"/>
    </location>
</feature>
<feature type="site" description="Twin-His motif. Important for optimum substrate conductance" evidence="2">
    <location>
        <position position="309"/>
    </location>
</feature>
<dbReference type="EMBL" id="L77117">
    <property type="protein sequence ID" value="AAB98038.1"/>
    <property type="molecule type" value="Genomic_DNA"/>
</dbReference>
<dbReference type="PIR" id="B64307">
    <property type="entry name" value="B64307"/>
</dbReference>
<dbReference type="SMR" id="Q60366"/>
<dbReference type="FunCoup" id="Q60366">
    <property type="interactions" value="10"/>
</dbReference>
<dbReference type="STRING" id="243232.MJ_0058"/>
<dbReference type="PaxDb" id="243232-MJ_0058"/>
<dbReference type="EnsemblBacteria" id="AAB98038">
    <property type="protein sequence ID" value="AAB98038"/>
    <property type="gene ID" value="MJ_0058"/>
</dbReference>
<dbReference type="KEGG" id="mja:MJ_0058"/>
<dbReference type="eggNOG" id="arCOG04397">
    <property type="taxonomic scope" value="Archaea"/>
</dbReference>
<dbReference type="HOGENOM" id="CLU_000445_33_1_2"/>
<dbReference type="InParanoid" id="Q60366"/>
<dbReference type="PhylomeDB" id="Q60366"/>
<dbReference type="Proteomes" id="UP000000805">
    <property type="component" value="Chromosome"/>
</dbReference>
<dbReference type="GO" id="GO:0005886">
    <property type="term" value="C:plasma membrane"/>
    <property type="evidence" value="ECO:0007669"/>
    <property type="project" value="UniProtKB-SubCell"/>
</dbReference>
<dbReference type="GO" id="GO:0008519">
    <property type="term" value="F:ammonium channel activity"/>
    <property type="evidence" value="ECO:0007669"/>
    <property type="project" value="InterPro"/>
</dbReference>
<dbReference type="GO" id="GO:0097272">
    <property type="term" value="P:ammonium homeostasis"/>
    <property type="evidence" value="ECO:0000318"/>
    <property type="project" value="GO_Central"/>
</dbReference>
<dbReference type="GO" id="GO:0072488">
    <property type="term" value="P:ammonium transmembrane transport"/>
    <property type="evidence" value="ECO:0000318"/>
    <property type="project" value="GO_Central"/>
</dbReference>
<dbReference type="Gene3D" id="1.10.3430.10">
    <property type="entry name" value="Ammonium transporter AmtB like domains"/>
    <property type="match status" value="1"/>
</dbReference>
<dbReference type="InterPro" id="IPR029020">
    <property type="entry name" value="Ammonium/urea_transptr"/>
</dbReference>
<dbReference type="InterPro" id="IPR001905">
    <property type="entry name" value="Ammonium_transpt"/>
</dbReference>
<dbReference type="InterPro" id="IPR018047">
    <property type="entry name" value="Ammonium_transpt_CS"/>
</dbReference>
<dbReference type="InterPro" id="IPR024041">
    <property type="entry name" value="NH4_transpt_AmtB-like_dom"/>
</dbReference>
<dbReference type="NCBIfam" id="TIGR00836">
    <property type="entry name" value="amt"/>
    <property type="match status" value="1"/>
</dbReference>
<dbReference type="PANTHER" id="PTHR11730">
    <property type="entry name" value="AMMONIUM TRANSPORTER"/>
    <property type="match status" value="1"/>
</dbReference>
<dbReference type="PANTHER" id="PTHR11730:SF6">
    <property type="entry name" value="AMMONIUM TRANSPORTER"/>
    <property type="match status" value="1"/>
</dbReference>
<dbReference type="Pfam" id="PF00909">
    <property type="entry name" value="Ammonium_transp"/>
    <property type="match status" value="1"/>
</dbReference>
<dbReference type="SUPFAM" id="SSF111352">
    <property type="entry name" value="Ammonium transporter"/>
    <property type="match status" value="1"/>
</dbReference>
<dbReference type="PROSITE" id="PS01219">
    <property type="entry name" value="AMMONIUM_TRANSP"/>
    <property type="match status" value="1"/>
</dbReference>
<accession>Q60366</accession>
<evidence type="ECO:0000250" key="1">
    <source>
        <dbReference type="UniProtKB" id="O29285"/>
    </source>
</evidence>
<evidence type="ECO:0000250" key="2">
    <source>
        <dbReference type="UniProtKB" id="P69681"/>
    </source>
</evidence>
<evidence type="ECO:0000255" key="3"/>
<evidence type="ECO:0000269" key="4">
    <source>
    </source>
</evidence>
<evidence type="ECO:0000303" key="5">
    <source>
    </source>
</evidence>
<evidence type="ECO:0000305" key="6"/>
<gene>
    <name evidence="5" type="primary">amt1</name>
    <name type="ordered locus">MJ0058</name>
</gene>
<protein>
    <recommendedName>
        <fullName evidence="6">Ammonium transporter Amt1</fullName>
    </recommendedName>
</protein>
<name>AMT1_METJA</name>
<comment type="function">
    <text evidence="1">Involved in the uptake of ammonium/ammonia (NH(4)(+)/NH(3)) (By similarity). Transport is electrogenic (By similarity).</text>
</comment>
<comment type="activity regulation">
    <text evidence="4">Activity is regulated by the nitrogen regulatory protein GlnK1 via direct interaction (PubMed:17203075). Formation of the GlnK1/Amt1 complex is decreased in the presence of Mg-ATP or 2-oxoglutarate. The presence of both effectors abolishes the formation of the complex (PubMed:17203075).</text>
</comment>
<comment type="subunit">
    <text evidence="4">Homotrimer (PubMed:17203075). Interacts and forms a complex with GlnK1 (PubMed:17203075).</text>
</comment>
<comment type="subcellular location">
    <subcellularLocation>
        <location evidence="6">Cell membrane</location>
        <topology evidence="3">Multi-pass membrane protein</topology>
    </subcellularLocation>
</comment>
<comment type="similarity">
    <text evidence="6">Belongs to the ammonia transporter channel (TC 1.A.11.2) family.</text>
</comment>
<organism>
    <name type="scientific">Methanocaldococcus jannaschii (strain ATCC 43067 / DSM 2661 / JAL-1 / JCM 10045 / NBRC 100440)</name>
    <name type="common">Methanococcus jannaschii</name>
    <dbReference type="NCBI Taxonomy" id="243232"/>
    <lineage>
        <taxon>Archaea</taxon>
        <taxon>Methanobacteriati</taxon>
        <taxon>Methanobacteriota</taxon>
        <taxon>Methanomada group</taxon>
        <taxon>Methanococci</taxon>
        <taxon>Methanococcales</taxon>
        <taxon>Methanocaldococcaceae</taxon>
        <taxon>Methanocaldococcus</taxon>
    </lineage>
</organism>
<sequence>MFEVKHMDGIDVFFFMWAASLIFFMKAGFIALEIGQFRAKNVSYHCVLKLLDLAAVFIAYLFIGYGISYGFENIMPLITGTFDADLGAWWMKMVMFAAAAVTIITGGVAERIKILPYFIGALIVGGILYPIVEHLVWGGGFANLGINFHDYAGSGAVHLFGGLVGLMAAYVLGPRIDKYINGKPQAIPGHNIPIAVLGAFILAFGWYGFNIGSASGIANGVELASVAMATTMALAGGIIGGALSSRNDPLYTANGMCAGLVAVCSGVDLFTPIGAFIVGLLAGIQQPFTYKFIEEKLKIDDVCAIGPVHAMSGLIGVICAGIPFLLKADAVSKVSITGQIIGAIVIALIAIVGGLIIYKGLDLTIGLRVSEEAEKVGLDTAILQTTAYSEE</sequence>
<proteinExistence type="evidence at protein level"/>